<name>RL17_SALHS</name>
<reference key="1">
    <citation type="journal article" date="2011" name="J. Bacteriol.">
        <title>Comparative genomics of 28 Salmonella enterica isolates: evidence for CRISPR-mediated adaptive sublineage evolution.</title>
        <authorList>
            <person name="Fricke W.F."/>
            <person name="Mammel M.K."/>
            <person name="McDermott P.F."/>
            <person name="Tartera C."/>
            <person name="White D.G."/>
            <person name="Leclerc J.E."/>
            <person name="Ravel J."/>
            <person name="Cebula T.A."/>
        </authorList>
    </citation>
    <scope>NUCLEOTIDE SEQUENCE [LARGE SCALE GENOMIC DNA]</scope>
    <source>
        <strain>SL476</strain>
    </source>
</reference>
<feature type="chain" id="PRO_1000144479" description="Large ribosomal subunit protein bL17">
    <location>
        <begin position="1"/>
        <end position="127"/>
    </location>
</feature>
<dbReference type="EMBL" id="CP001120">
    <property type="protein sequence ID" value="ACF68735.1"/>
    <property type="molecule type" value="Genomic_DNA"/>
</dbReference>
<dbReference type="RefSeq" id="WP_001216370.1">
    <property type="nucleotide sequence ID" value="NC_011083.1"/>
</dbReference>
<dbReference type="SMR" id="B4TJY4"/>
<dbReference type="GeneID" id="89546962"/>
<dbReference type="KEGG" id="seh:SeHA_C3717"/>
<dbReference type="HOGENOM" id="CLU_074407_2_0_6"/>
<dbReference type="Proteomes" id="UP000001866">
    <property type="component" value="Chromosome"/>
</dbReference>
<dbReference type="GO" id="GO:0022625">
    <property type="term" value="C:cytosolic large ribosomal subunit"/>
    <property type="evidence" value="ECO:0007669"/>
    <property type="project" value="TreeGrafter"/>
</dbReference>
<dbReference type="GO" id="GO:0003735">
    <property type="term" value="F:structural constituent of ribosome"/>
    <property type="evidence" value="ECO:0007669"/>
    <property type="project" value="InterPro"/>
</dbReference>
<dbReference type="GO" id="GO:0006412">
    <property type="term" value="P:translation"/>
    <property type="evidence" value="ECO:0007669"/>
    <property type="project" value="UniProtKB-UniRule"/>
</dbReference>
<dbReference type="FunFam" id="3.90.1030.10:FF:000001">
    <property type="entry name" value="50S ribosomal protein L17"/>
    <property type="match status" value="1"/>
</dbReference>
<dbReference type="Gene3D" id="3.90.1030.10">
    <property type="entry name" value="Ribosomal protein L17"/>
    <property type="match status" value="1"/>
</dbReference>
<dbReference type="HAMAP" id="MF_01368">
    <property type="entry name" value="Ribosomal_bL17"/>
    <property type="match status" value="1"/>
</dbReference>
<dbReference type="InterPro" id="IPR000456">
    <property type="entry name" value="Ribosomal_bL17"/>
</dbReference>
<dbReference type="InterPro" id="IPR047859">
    <property type="entry name" value="Ribosomal_bL17_CS"/>
</dbReference>
<dbReference type="InterPro" id="IPR036373">
    <property type="entry name" value="Ribosomal_bL17_sf"/>
</dbReference>
<dbReference type="NCBIfam" id="TIGR00059">
    <property type="entry name" value="L17"/>
    <property type="match status" value="1"/>
</dbReference>
<dbReference type="PANTHER" id="PTHR14413:SF16">
    <property type="entry name" value="LARGE RIBOSOMAL SUBUNIT PROTEIN BL17M"/>
    <property type="match status" value="1"/>
</dbReference>
<dbReference type="PANTHER" id="PTHR14413">
    <property type="entry name" value="RIBOSOMAL PROTEIN L17"/>
    <property type="match status" value="1"/>
</dbReference>
<dbReference type="Pfam" id="PF01196">
    <property type="entry name" value="Ribosomal_L17"/>
    <property type="match status" value="1"/>
</dbReference>
<dbReference type="SUPFAM" id="SSF64263">
    <property type="entry name" value="Prokaryotic ribosomal protein L17"/>
    <property type="match status" value="1"/>
</dbReference>
<dbReference type="PROSITE" id="PS01167">
    <property type="entry name" value="RIBOSOMAL_L17"/>
    <property type="match status" value="1"/>
</dbReference>
<evidence type="ECO:0000255" key="1">
    <source>
        <dbReference type="HAMAP-Rule" id="MF_01368"/>
    </source>
</evidence>
<evidence type="ECO:0000305" key="2"/>
<accession>B4TJY4</accession>
<keyword id="KW-0687">Ribonucleoprotein</keyword>
<keyword id="KW-0689">Ribosomal protein</keyword>
<protein>
    <recommendedName>
        <fullName evidence="1">Large ribosomal subunit protein bL17</fullName>
    </recommendedName>
    <alternativeName>
        <fullName evidence="2">50S ribosomal protein L17</fullName>
    </alternativeName>
</protein>
<sequence>MRHRKSGRQLNRNSSHRQAMFRNMAGSLVRHEIIKTTLPKAKELRRVVEPLITLAKTDSVANRRLAFARTRDNEIVAKLFNELGPRFASRAGGYTRILKCGFRAGDNAPMAYIELVDRSEKTEAAAE</sequence>
<comment type="subunit">
    <text evidence="1">Part of the 50S ribosomal subunit. Contacts protein L32.</text>
</comment>
<comment type="similarity">
    <text evidence="1">Belongs to the bacterial ribosomal protein bL17 family.</text>
</comment>
<proteinExistence type="inferred from homology"/>
<organism>
    <name type="scientific">Salmonella heidelberg (strain SL476)</name>
    <dbReference type="NCBI Taxonomy" id="454169"/>
    <lineage>
        <taxon>Bacteria</taxon>
        <taxon>Pseudomonadati</taxon>
        <taxon>Pseudomonadota</taxon>
        <taxon>Gammaproteobacteria</taxon>
        <taxon>Enterobacterales</taxon>
        <taxon>Enterobacteriaceae</taxon>
        <taxon>Salmonella</taxon>
    </lineage>
</organism>
<gene>
    <name evidence="1" type="primary">rplQ</name>
    <name type="ordered locus">SeHA_C3717</name>
</gene>